<evidence type="ECO:0000255" key="1">
    <source>
        <dbReference type="HAMAP-Rule" id="MF_00123"/>
    </source>
</evidence>
<sequence>MKEQLRACILKGIEGCFADGTLTSGEVPAINVEKPAHAEHGDFATNVAMQMAKQQRKAPRAVAEILVAKLAGASDLIESLEIAGPGFINFFIKDGAWRRTLSEIDRAGDAWGKSGIGRGKKVQVEFVSANPTGPLHIGHGRGAATGDAVASLLSAAGFDVQREYYINDAGNQMNTLGLSGLLRYKELLGEKIEFPETCYQGDYMKDIARDAVTKYGDRFLKVSQEEGVAFFSKMGGDLILAGIDQDLQDFGVRFDHWFSEQSLFDEGKVNSAIEEMQAKGLIYEQEGALWFRTTDYGDDKDRVVVRSNGVTTYFASDIAYHRDKFARGFDWVIDVWGADHHGYVPRLKSVVQGLGRDASDLGIILVQLVSLLRDGVPVAMSTRSGEFVTLKEVVDEVGRDAARFFFLMRRSDSQLDFDLELAKRQSNDNPVYYVQYAHARIKSIFDTARERGVEPLFDSVKFELLQTPEDLSLIKKLSVYPEILEGGAVNFEPHRITYYLQELAGEFHSFYNKSRVITPEEPELTQARLFLLHCVAITLKNALTVLGISAPERM</sequence>
<gene>
    <name evidence="1" type="primary">argS</name>
    <name type="ordered locus">GM21_1940</name>
</gene>
<organism>
    <name type="scientific">Geobacter sp. (strain M21)</name>
    <dbReference type="NCBI Taxonomy" id="443144"/>
    <lineage>
        <taxon>Bacteria</taxon>
        <taxon>Pseudomonadati</taxon>
        <taxon>Thermodesulfobacteriota</taxon>
        <taxon>Desulfuromonadia</taxon>
        <taxon>Geobacterales</taxon>
        <taxon>Geobacteraceae</taxon>
        <taxon>Geobacter</taxon>
    </lineage>
</organism>
<feature type="chain" id="PRO_1000203096" description="Arginine--tRNA ligase">
    <location>
        <begin position="1"/>
        <end position="554"/>
    </location>
</feature>
<feature type="short sequence motif" description="'HIGH' region">
    <location>
        <begin position="129"/>
        <end position="139"/>
    </location>
</feature>
<comment type="catalytic activity">
    <reaction evidence="1">
        <text>tRNA(Arg) + L-arginine + ATP = L-arginyl-tRNA(Arg) + AMP + diphosphate</text>
        <dbReference type="Rhea" id="RHEA:20301"/>
        <dbReference type="Rhea" id="RHEA-COMP:9658"/>
        <dbReference type="Rhea" id="RHEA-COMP:9673"/>
        <dbReference type="ChEBI" id="CHEBI:30616"/>
        <dbReference type="ChEBI" id="CHEBI:32682"/>
        <dbReference type="ChEBI" id="CHEBI:33019"/>
        <dbReference type="ChEBI" id="CHEBI:78442"/>
        <dbReference type="ChEBI" id="CHEBI:78513"/>
        <dbReference type="ChEBI" id="CHEBI:456215"/>
        <dbReference type="EC" id="6.1.1.19"/>
    </reaction>
</comment>
<comment type="subunit">
    <text evidence="1">Monomer.</text>
</comment>
<comment type="subcellular location">
    <subcellularLocation>
        <location evidence="1">Cytoplasm</location>
    </subcellularLocation>
</comment>
<comment type="similarity">
    <text evidence="1">Belongs to the class-I aminoacyl-tRNA synthetase family.</text>
</comment>
<dbReference type="EC" id="6.1.1.19" evidence="1"/>
<dbReference type="EMBL" id="CP001661">
    <property type="protein sequence ID" value="ACT17993.1"/>
    <property type="molecule type" value="Genomic_DNA"/>
</dbReference>
<dbReference type="SMR" id="C6E805"/>
<dbReference type="STRING" id="443144.GM21_1940"/>
<dbReference type="KEGG" id="gem:GM21_1940"/>
<dbReference type="eggNOG" id="COG0018">
    <property type="taxonomic scope" value="Bacteria"/>
</dbReference>
<dbReference type="HOGENOM" id="CLU_006406_0_1_7"/>
<dbReference type="OrthoDB" id="9803211at2"/>
<dbReference type="GO" id="GO:0005737">
    <property type="term" value="C:cytoplasm"/>
    <property type="evidence" value="ECO:0007669"/>
    <property type="project" value="UniProtKB-SubCell"/>
</dbReference>
<dbReference type="GO" id="GO:0004814">
    <property type="term" value="F:arginine-tRNA ligase activity"/>
    <property type="evidence" value="ECO:0007669"/>
    <property type="project" value="UniProtKB-UniRule"/>
</dbReference>
<dbReference type="GO" id="GO:0005524">
    <property type="term" value="F:ATP binding"/>
    <property type="evidence" value="ECO:0007669"/>
    <property type="project" value="UniProtKB-UniRule"/>
</dbReference>
<dbReference type="GO" id="GO:0006420">
    <property type="term" value="P:arginyl-tRNA aminoacylation"/>
    <property type="evidence" value="ECO:0007669"/>
    <property type="project" value="UniProtKB-UniRule"/>
</dbReference>
<dbReference type="CDD" id="cd00671">
    <property type="entry name" value="ArgRS_core"/>
    <property type="match status" value="1"/>
</dbReference>
<dbReference type="FunFam" id="1.10.730.10:FF:000008">
    <property type="entry name" value="Arginine--tRNA ligase"/>
    <property type="match status" value="1"/>
</dbReference>
<dbReference type="FunFam" id="3.30.1360.70:FF:000003">
    <property type="entry name" value="Arginine--tRNA ligase"/>
    <property type="match status" value="1"/>
</dbReference>
<dbReference type="FunFam" id="3.40.50.620:FF:000062">
    <property type="entry name" value="Arginine--tRNA ligase"/>
    <property type="match status" value="1"/>
</dbReference>
<dbReference type="Gene3D" id="3.30.1360.70">
    <property type="entry name" value="Arginyl tRNA synthetase N-terminal domain"/>
    <property type="match status" value="1"/>
</dbReference>
<dbReference type="Gene3D" id="3.40.50.620">
    <property type="entry name" value="HUPs"/>
    <property type="match status" value="1"/>
</dbReference>
<dbReference type="Gene3D" id="1.10.730.10">
    <property type="entry name" value="Isoleucyl-tRNA Synthetase, Domain 1"/>
    <property type="match status" value="1"/>
</dbReference>
<dbReference type="HAMAP" id="MF_00123">
    <property type="entry name" value="Arg_tRNA_synth"/>
    <property type="match status" value="1"/>
</dbReference>
<dbReference type="InterPro" id="IPR001412">
    <property type="entry name" value="aa-tRNA-synth_I_CS"/>
</dbReference>
<dbReference type="InterPro" id="IPR001278">
    <property type="entry name" value="Arg-tRNA-ligase"/>
</dbReference>
<dbReference type="InterPro" id="IPR005148">
    <property type="entry name" value="Arg-tRNA-synth_N"/>
</dbReference>
<dbReference type="InterPro" id="IPR036695">
    <property type="entry name" value="Arg-tRNA-synth_N_sf"/>
</dbReference>
<dbReference type="InterPro" id="IPR035684">
    <property type="entry name" value="ArgRS_core"/>
</dbReference>
<dbReference type="InterPro" id="IPR008909">
    <property type="entry name" value="DALR_anticod-bd"/>
</dbReference>
<dbReference type="InterPro" id="IPR014729">
    <property type="entry name" value="Rossmann-like_a/b/a_fold"/>
</dbReference>
<dbReference type="InterPro" id="IPR009080">
    <property type="entry name" value="tRNAsynth_Ia_anticodon-bd"/>
</dbReference>
<dbReference type="NCBIfam" id="TIGR00456">
    <property type="entry name" value="argS"/>
    <property type="match status" value="1"/>
</dbReference>
<dbReference type="PANTHER" id="PTHR11956:SF5">
    <property type="entry name" value="ARGININE--TRNA LIGASE, CYTOPLASMIC"/>
    <property type="match status" value="1"/>
</dbReference>
<dbReference type="PANTHER" id="PTHR11956">
    <property type="entry name" value="ARGINYL-TRNA SYNTHETASE"/>
    <property type="match status" value="1"/>
</dbReference>
<dbReference type="Pfam" id="PF03485">
    <property type="entry name" value="Arg_tRNA_synt_N"/>
    <property type="match status" value="1"/>
</dbReference>
<dbReference type="Pfam" id="PF05746">
    <property type="entry name" value="DALR_1"/>
    <property type="match status" value="1"/>
</dbReference>
<dbReference type="Pfam" id="PF00750">
    <property type="entry name" value="tRNA-synt_1d"/>
    <property type="match status" value="1"/>
</dbReference>
<dbReference type="PRINTS" id="PR01038">
    <property type="entry name" value="TRNASYNTHARG"/>
</dbReference>
<dbReference type="SMART" id="SM01016">
    <property type="entry name" value="Arg_tRNA_synt_N"/>
    <property type="match status" value="1"/>
</dbReference>
<dbReference type="SMART" id="SM00836">
    <property type="entry name" value="DALR_1"/>
    <property type="match status" value="1"/>
</dbReference>
<dbReference type="SUPFAM" id="SSF47323">
    <property type="entry name" value="Anticodon-binding domain of a subclass of class I aminoacyl-tRNA synthetases"/>
    <property type="match status" value="1"/>
</dbReference>
<dbReference type="SUPFAM" id="SSF55190">
    <property type="entry name" value="Arginyl-tRNA synthetase (ArgRS), N-terminal 'additional' domain"/>
    <property type="match status" value="1"/>
</dbReference>
<dbReference type="SUPFAM" id="SSF52374">
    <property type="entry name" value="Nucleotidylyl transferase"/>
    <property type="match status" value="1"/>
</dbReference>
<dbReference type="PROSITE" id="PS00178">
    <property type="entry name" value="AA_TRNA_LIGASE_I"/>
    <property type="match status" value="1"/>
</dbReference>
<protein>
    <recommendedName>
        <fullName evidence="1">Arginine--tRNA ligase</fullName>
        <ecNumber evidence="1">6.1.1.19</ecNumber>
    </recommendedName>
    <alternativeName>
        <fullName evidence="1">Arginyl-tRNA synthetase</fullName>
        <shortName evidence="1">ArgRS</shortName>
    </alternativeName>
</protein>
<proteinExistence type="inferred from homology"/>
<accession>C6E805</accession>
<reference key="1">
    <citation type="submission" date="2009-07" db="EMBL/GenBank/DDBJ databases">
        <title>Complete sequence of Geobacter sp. M21.</title>
        <authorList>
            <consortium name="US DOE Joint Genome Institute"/>
            <person name="Lucas S."/>
            <person name="Copeland A."/>
            <person name="Lapidus A."/>
            <person name="Glavina del Rio T."/>
            <person name="Dalin E."/>
            <person name="Tice H."/>
            <person name="Bruce D."/>
            <person name="Goodwin L."/>
            <person name="Pitluck S."/>
            <person name="Saunders E."/>
            <person name="Brettin T."/>
            <person name="Detter J.C."/>
            <person name="Han C."/>
            <person name="Larimer F."/>
            <person name="Land M."/>
            <person name="Hauser L."/>
            <person name="Kyrpides N."/>
            <person name="Ovchinnikova G."/>
            <person name="Lovley D."/>
        </authorList>
    </citation>
    <scope>NUCLEOTIDE SEQUENCE [LARGE SCALE GENOMIC DNA]</scope>
    <source>
        <strain>M21</strain>
    </source>
</reference>
<keyword id="KW-0030">Aminoacyl-tRNA synthetase</keyword>
<keyword id="KW-0067">ATP-binding</keyword>
<keyword id="KW-0963">Cytoplasm</keyword>
<keyword id="KW-0436">Ligase</keyword>
<keyword id="KW-0547">Nucleotide-binding</keyword>
<keyword id="KW-0648">Protein biosynthesis</keyword>
<name>SYR_GEOSM</name>